<name>PRPSA_DICDI</name>
<dbReference type="EC" id="2.7.6.1"/>
<dbReference type="EMBL" id="AAFI02000070">
    <property type="protein sequence ID" value="EAL65104.1"/>
    <property type="molecule type" value="Genomic_DNA"/>
</dbReference>
<dbReference type="RefSeq" id="XP_638466.1">
    <property type="nucleotide sequence ID" value="XM_633374.1"/>
</dbReference>
<dbReference type="SMR" id="Q54PA9"/>
<dbReference type="FunCoup" id="Q54PA9">
    <property type="interactions" value="354"/>
</dbReference>
<dbReference type="STRING" id="44689.Q54PA9"/>
<dbReference type="PaxDb" id="44689-DDB0237882"/>
<dbReference type="EnsemblProtists" id="EAL65104">
    <property type="protein sequence ID" value="EAL65104"/>
    <property type="gene ID" value="DDB_G0284669"/>
</dbReference>
<dbReference type="GeneID" id="8624717"/>
<dbReference type="KEGG" id="ddi:DDB_G0284669"/>
<dbReference type="dictyBase" id="DDB_G0284669">
    <property type="gene designation" value="prsA"/>
</dbReference>
<dbReference type="VEuPathDB" id="AmoebaDB:DDB_G0284669"/>
<dbReference type="eggNOG" id="KOG1448">
    <property type="taxonomic scope" value="Eukaryota"/>
</dbReference>
<dbReference type="HOGENOM" id="CLU_033546_4_0_1"/>
<dbReference type="InParanoid" id="Q54PA9"/>
<dbReference type="OMA" id="YFGWARQ"/>
<dbReference type="PhylomeDB" id="Q54PA9"/>
<dbReference type="Reactome" id="R-DDI-73843">
    <property type="pathway name" value="5-Phosphoribose 1-diphosphate biosynthesis"/>
</dbReference>
<dbReference type="UniPathway" id="UPA00087">
    <property type="reaction ID" value="UER00172"/>
</dbReference>
<dbReference type="PRO" id="PR:Q54PA9"/>
<dbReference type="Proteomes" id="UP000002195">
    <property type="component" value="Chromosome 4"/>
</dbReference>
<dbReference type="GO" id="GO:0005737">
    <property type="term" value="C:cytoplasm"/>
    <property type="evidence" value="ECO:0000318"/>
    <property type="project" value="GO_Central"/>
</dbReference>
<dbReference type="GO" id="GO:0045335">
    <property type="term" value="C:phagocytic vesicle"/>
    <property type="evidence" value="ECO:0007005"/>
    <property type="project" value="dictyBase"/>
</dbReference>
<dbReference type="GO" id="GO:0002189">
    <property type="term" value="C:ribose phosphate diphosphokinase complex"/>
    <property type="evidence" value="ECO:0000318"/>
    <property type="project" value="GO_Central"/>
</dbReference>
<dbReference type="GO" id="GO:0005524">
    <property type="term" value="F:ATP binding"/>
    <property type="evidence" value="ECO:0007669"/>
    <property type="project" value="UniProtKB-KW"/>
</dbReference>
<dbReference type="GO" id="GO:0016301">
    <property type="term" value="F:kinase activity"/>
    <property type="evidence" value="ECO:0007669"/>
    <property type="project" value="UniProtKB-KW"/>
</dbReference>
<dbReference type="GO" id="GO:0000287">
    <property type="term" value="F:magnesium ion binding"/>
    <property type="evidence" value="ECO:0007669"/>
    <property type="project" value="InterPro"/>
</dbReference>
<dbReference type="GO" id="GO:0004749">
    <property type="term" value="F:ribose phosphate diphosphokinase activity"/>
    <property type="evidence" value="ECO:0000250"/>
    <property type="project" value="dictyBase"/>
</dbReference>
<dbReference type="GO" id="GO:0006015">
    <property type="term" value="P:5-phosphoribose 1-diphosphate biosynthetic process"/>
    <property type="evidence" value="ECO:0000250"/>
    <property type="project" value="dictyBase"/>
</dbReference>
<dbReference type="GO" id="GO:0006164">
    <property type="term" value="P:purine nucleotide biosynthetic process"/>
    <property type="evidence" value="ECO:0000318"/>
    <property type="project" value="GO_Central"/>
</dbReference>
<dbReference type="GO" id="GO:0009617">
    <property type="term" value="P:response to bacterium"/>
    <property type="evidence" value="ECO:0007007"/>
    <property type="project" value="dictyBase"/>
</dbReference>
<dbReference type="GO" id="GO:0009156">
    <property type="term" value="P:ribonucleoside monophosphate biosynthetic process"/>
    <property type="evidence" value="ECO:0007669"/>
    <property type="project" value="InterPro"/>
</dbReference>
<dbReference type="CDD" id="cd06223">
    <property type="entry name" value="PRTases_typeI"/>
    <property type="match status" value="1"/>
</dbReference>
<dbReference type="FunFam" id="3.40.50.2020:FF:000001">
    <property type="entry name" value="Ribose-phosphate pyrophosphokinase"/>
    <property type="match status" value="1"/>
</dbReference>
<dbReference type="Gene3D" id="3.40.50.2020">
    <property type="match status" value="2"/>
</dbReference>
<dbReference type="HAMAP" id="MF_00583_B">
    <property type="entry name" value="RibP_PPkinase_B"/>
    <property type="match status" value="1"/>
</dbReference>
<dbReference type="InterPro" id="IPR000842">
    <property type="entry name" value="PRib_PP_synth_CS"/>
</dbReference>
<dbReference type="InterPro" id="IPR029099">
    <property type="entry name" value="Pribosyltran_N"/>
</dbReference>
<dbReference type="InterPro" id="IPR000836">
    <property type="entry name" value="PRibTrfase_dom"/>
</dbReference>
<dbReference type="InterPro" id="IPR029057">
    <property type="entry name" value="PRTase-like"/>
</dbReference>
<dbReference type="InterPro" id="IPR005946">
    <property type="entry name" value="Rib-P_diPkinase"/>
</dbReference>
<dbReference type="InterPro" id="IPR037515">
    <property type="entry name" value="Rib-P_diPkinase_bac"/>
</dbReference>
<dbReference type="NCBIfam" id="NF002320">
    <property type="entry name" value="PRK01259.1"/>
    <property type="match status" value="1"/>
</dbReference>
<dbReference type="NCBIfam" id="TIGR01251">
    <property type="entry name" value="ribP_PPkin"/>
    <property type="match status" value="1"/>
</dbReference>
<dbReference type="PANTHER" id="PTHR10210">
    <property type="entry name" value="RIBOSE-PHOSPHATE DIPHOSPHOKINASE FAMILY MEMBER"/>
    <property type="match status" value="1"/>
</dbReference>
<dbReference type="PANTHER" id="PTHR10210:SF115">
    <property type="entry name" value="RIBOSE-PHOSPHATE PYROPHOSPHOKINASE A"/>
    <property type="match status" value="1"/>
</dbReference>
<dbReference type="Pfam" id="PF14572">
    <property type="entry name" value="Pribosyl_synth"/>
    <property type="match status" value="1"/>
</dbReference>
<dbReference type="Pfam" id="PF13793">
    <property type="entry name" value="Pribosyltran_N"/>
    <property type="match status" value="1"/>
</dbReference>
<dbReference type="SMART" id="SM01400">
    <property type="entry name" value="Pribosyltran_N"/>
    <property type="match status" value="1"/>
</dbReference>
<dbReference type="SUPFAM" id="SSF53271">
    <property type="entry name" value="PRTase-like"/>
    <property type="match status" value="1"/>
</dbReference>
<dbReference type="PROSITE" id="PS00114">
    <property type="entry name" value="PRPP_SYNTHASE"/>
    <property type="match status" value="1"/>
</dbReference>
<gene>
    <name type="primary">prsA</name>
    <name type="ORF">DDB_G0284669</name>
</gene>
<accession>Q54PA9</accession>
<protein>
    <recommendedName>
        <fullName>Ribose-phosphate pyrophosphokinase A</fullName>
        <ecNumber>2.7.6.1</ecNumber>
    </recommendedName>
    <alternativeName>
        <fullName>Phosphoribosyl pyrophosphate synthase A</fullName>
    </alternativeName>
</protein>
<proteinExistence type="evidence at protein level"/>
<comment type="catalytic activity">
    <reaction>
        <text>D-ribose 5-phosphate + ATP = 5-phospho-alpha-D-ribose 1-diphosphate + AMP + H(+)</text>
        <dbReference type="Rhea" id="RHEA:15609"/>
        <dbReference type="ChEBI" id="CHEBI:15378"/>
        <dbReference type="ChEBI" id="CHEBI:30616"/>
        <dbReference type="ChEBI" id="CHEBI:58017"/>
        <dbReference type="ChEBI" id="CHEBI:78346"/>
        <dbReference type="ChEBI" id="CHEBI:456215"/>
        <dbReference type="EC" id="2.7.6.1"/>
    </reaction>
</comment>
<comment type="cofactor">
    <cofactor evidence="1">
        <name>Mg(2+)</name>
        <dbReference type="ChEBI" id="CHEBI:18420"/>
    </cofactor>
</comment>
<comment type="pathway">
    <text>Metabolic intermediate biosynthesis; 5-phospho-alpha-D-ribose 1-diphosphate biosynthesis; 5-phospho-alpha-D-ribose 1-diphosphate from D-ribose 5-phosphate (route I): step 1/1.</text>
</comment>
<comment type="similarity">
    <text evidence="3">Belongs to the ribose-phosphate pyrophosphokinase family.</text>
</comment>
<keyword id="KW-0067">ATP-binding</keyword>
<keyword id="KW-0418">Kinase</keyword>
<keyword id="KW-0460">Magnesium</keyword>
<keyword id="KW-0479">Metal-binding</keyword>
<keyword id="KW-0545">Nucleotide biosynthesis</keyword>
<keyword id="KW-0547">Nucleotide-binding</keyword>
<keyword id="KW-1185">Reference proteome</keyword>
<keyword id="KW-0808">Transferase</keyword>
<feature type="chain" id="PRO_0000328320" description="Ribose-phosphate pyrophosphokinase A">
    <location>
        <begin position="1"/>
        <end position="317"/>
    </location>
</feature>
<feature type="region of interest" description="Binding of phosphoribosylpyrophosphate" evidence="2">
    <location>
        <begin position="212"/>
        <end position="227"/>
    </location>
</feature>
<feature type="binding site" evidence="2">
    <location>
        <position position="130"/>
    </location>
    <ligand>
        <name>Mg(2+)</name>
        <dbReference type="ChEBI" id="CHEBI:18420"/>
    </ligand>
</feature>
<feature type="binding site" evidence="2">
    <location>
        <position position="132"/>
    </location>
    <ligand>
        <name>Mg(2+)</name>
        <dbReference type="ChEBI" id="CHEBI:18420"/>
    </ligand>
</feature>
<feature type="binding site" evidence="2">
    <location>
        <position position="145"/>
    </location>
    <ligand>
        <name>Mg(2+)</name>
        <dbReference type="ChEBI" id="CHEBI:18420"/>
    </ligand>
</feature>
<organism>
    <name type="scientific">Dictyostelium discoideum</name>
    <name type="common">Social amoeba</name>
    <dbReference type="NCBI Taxonomy" id="44689"/>
    <lineage>
        <taxon>Eukaryota</taxon>
        <taxon>Amoebozoa</taxon>
        <taxon>Evosea</taxon>
        <taxon>Eumycetozoa</taxon>
        <taxon>Dictyostelia</taxon>
        <taxon>Dictyosteliales</taxon>
        <taxon>Dictyosteliaceae</taxon>
        <taxon>Dictyostelium</taxon>
    </lineage>
</organism>
<sequence length="317" mass="34465">MGDRIKILTGNAHRELASEISDDLNLALGKAHVGKFSNGETSVMISESIRDMDVYIIQPTCNPNVNDNLMELLIMADAIRRASAHRITAVIPCFGYARQDKKDKSRAPITGKLVANLIETAGIDRVITMDLHASQIQGFFNIPVDNLYAEPQIIKYIRKYIPGEKVIVSPDAGGVKRAKSISDKLDADLAIIHKERKKANEVSGMILVGDVKDKVALIVDDMADTCGTLVSACEMLISKGATKVYALVTHGVLSGDAIQKLNESSLTELVITNTIPHAEKAAKCPKIKTINIAHTLSEAIRRTHHGESISSLFSDTK</sequence>
<reference key="1">
    <citation type="journal article" date="2005" name="Nature">
        <title>The genome of the social amoeba Dictyostelium discoideum.</title>
        <authorList>
            <person name="Eichinger L."/>
            <person name="Pachebat J.A."/>
            <person name="Gloeckner G."/>
            <person name="Rajandream M.A."/>
            <person name="Sucgang R."/>
            <person name="Berriman M."/>
            <person name="Song J."/>
            <person name="Olsen R."/>
            <person name="Szafranski K."/>
            <person name="Xu Q."/>
            <person name="Tunggal B."/>
            <person name="Kummerfeld S."/>
            <person name="Madera M."/>
            <person name="Konfortov B.A."/>
            <person name="Rivero F."/>
            <person name="Bankier A.T."/>
            <person name="Lehmann R."/>
            <person name="Hamlin N."/>
            <person name="Davies R."/>
            <person name="Gaudet P."/>
            <person name="Fey P."/>
            <person name="Pilcher K."/>
            <person name="Chen G."/>
            <person name="Saunders D."/>
            <person name="Sodergren E.J."/>
            <person name="Davis P."/>
            <person name="Kerhornou A."/>
            <person name="Nie X."/>
            <person name="Hall N."/>
            <person name="Anjard C."/>
            <person name="Hemphill L."/>
            <person name="Bason N."/>
            <person name="Farbrother P."/>
            <person name="Desany B."/>
            <person name="Just E."/>
            <person name="Morio T."/>
            <person name="Rost R."/>
            <person name="Churcher C.M."/>
            <person name="Cooper J."/>
            <person name="Haydock S."/>
            <person name="van Driessche N."/>
            <person name="Cronin A."/>
            <person name="Goodhead I."/>
            <person name="Muzny D.M."/>
            <person name="Mourier T."/>
            <person name="Pain A."/>
            <person name="Lu M."/>
            <person name="Harper D."/>
            <person name="Lindsay R."/>
            <person name="Hauser H."/>
            <person name="James K.D."/>
            <person name="Quiles M."/>
            <person name="Madan Babu M."/>
            <person name="Saito T."/>
            <person name="Buchrieser C."/>
            <person name="Wardroper A."/>
            <person name="Felder M."/>
            <person name="Thangavelu M."/>
            <person name="Johnson D."/>
            <person name="Knights A."/>
            <person name="Loulseged H."/>
            <person name="Mungall K.L."/>
            <person name="Oliver K."/>
            <person name="Price C."/>
            <person name="Quail M.A."/>
            <person name="Urushihara H."/>
            <person name="Hernandez J."/>
            <person name="Rabbinowitsch E."/>
            <person name="Steffen D."/>
            <person name="Sanders M."/>
            <person name="Ma J."/>
            <person name="Kohara Y."/>
            <person name="Sharp S."/>
            <person name="Simmonds M.N."/>
            <person name="Spiegler S."/>
            <person name="Tivey A."/>
            <person name="Sugano S."/>
            <person name="White B."/>
            <person name="Walker D."/>
            <person name="Woodward J.R."/>
            <person name="Winckler T."/>
            <person name="Tanaka Y."/>
            <person name="Shaulsky G."/>
            <person name="Schleicher M."/>
            <person name="Weinstock G.M."/>
            <person name="Rosenthal A."/>
            <person name="Cox E.C."/>
            <person name="Chisholm R.L."/>
            <person name="Gibbs R.A."/>
            <person name="Loomis W.F."/>
            <person name="Platzer M."/>
            <person name="Kay R.R."/>
            <person name="Williams J.G."/>
            <person name="Dear P.H."/>
            <person name="Noegel A.A."/>
            <person name="Barrell B.G."/>
            <person name="Kuspa A."/>
        </authorList>
    </citation>
    <scope>NUCLEOTIDE SEQUENCE [LARGE SCALE GENOMIC DNA]</scope>
    <source>
        <strain>AX4</strain>
    </source>
</reference>
<reference key="2">
    <citation type="journal article" date="2006" name="Mol. Cell. Proteomics">
        <title>Proteomics fingerprinting of phagosome maturation and evidence for the role of a Galpha during uptake.</title>
        <authorList>
            <person name="Gotthardt D."/>
            <person name="Blancheteau V."/>
            <person name="Bosserhoff A."/>
            <person name="Ruppert T."/>
            <person name="Delorenzi M."/>
            <person name="Soldati T."/>
        </authorList>
    </citation>
    <scope>IDENTIFICATION BY MASS SPECTROMETRY [LARGE SCALE ANALYSIS]</scope>
    <source>
        <strain>AX2</strain>
    </source>
</reference>
<evidence type="ECO:0000250" key="1"/>
<evidence type="ECO:0000255" key="2"/>
<evidence type="ECO:0000305" key="3"/>